<name>RS16_AERHH</name>
<evidence type="ECO:0000255" key="1">
    <source>
        <dbReference type="HAMAP-Rule" id="MF_00385"/>
    </source>
</evidence>
<evidence type="ECO:0000305" key="2"/>
<comment type="similarity">
    <text evidence="1">Belongs to the bacterial ribosomal protein bS16 family.</text>
</comment>
<dbReference type="EMBL" id="CP000462">
    <property type="protein sequence ID" value="ABK39291.1"/>
    <property type="molecule type" value="Genomic_DNA"/>
</dbReference>
<dbReference type="RefSeq" id="WP_005341383.1">
    <property type="nucleotide sequence ID" value="NC_008570.1"/>
</dbReference>
<dbReference type="RefSeq" id="YP_855208.1">
    <property type="nucleotide sequence ID" value="NC_008570.1"/>
</dbReference>
<dbReference type="SMR" id="A0KG23"/>
<dbReference type="STRING" id="380703.AHA_0666"/>
<dbReference type="EnsemblBacteria" id="ABK39291">
    <property type="protein sequence ID" value="ABK39291"/>
    <property type="gene ID" value="AHA_0666"/>
</dbReference>
<dbReference type="GeneID" id="4490673"/>
<dbReference type="KEGG" id="aha:AHA_0666"/>
<dbReference type="PATRIC" id="fig|380703.7.peg.667"/>
<dbReference type="eggNOG" id="COG0228">
    <property type="taxonomic scope" value="Bacteria"/>
</dbReference>
<dbReference type="HOGENOM" id="CLU_100590_5_1_6"/>
<dbReference type="OrthoDB" id="9807878at2"/>
<dbReference type="Proteomes" id="UP000000756">
    <property type="component" value="Chromosome"/>
</dbReference>
<dbReference type="GO" id="GO:0005737">
    <property type="term" value="C:cytoplasm"/>
    <property type="evidence" value="ECO:0007669"/>
    <property type="project" value="UniProtKB-ARBA"/>
</dbReference>
<dbReference type="GO" id="GO:0015935">
    <property type="term" value="C:small ribosomal subunit"/>
    <property type="evidence" value="ECO:0007669"/>
    <property type="project" value="TreeGrafter"/>
</dbReference>
<dbReference type="GO" id="GO:0003735">
    <property type="term" value="F:structural constituent of ribosome"/>
    <property type="evidence" value="ECO:0007669"/>
    <property type="project" value="InterPro"/>
</dbReference>
<dbReference type="GO" id="GO:0006412">
    <property type="term" value="P:translation"/>
    <property type="evidence" value="ECO:0007669"/>
    <property type="project" value="UniProtKB-UniRule"/>
</dbReference>
<dbReference type="FunFam" id="3.30.1320.10:FF:000001">
    <property type="entry name" value="30S ribosomal protein S16"/>
    <property type="match status" value="1"/>
</dbReference>
<dbReference type="Gene3D" id="3.30.1320.10">
    <property type="match status" value="1"/>
</dbReference>
<dbReference type="HAMAP" id="MF_00385">
    <property type="entry name" value="Ribosomal_bS16"/>
    <property type="match status" value="1"/>
</dbReference>
<dbReference type="InterPro" id="IPR000307">
    <property type="entry name" value="Ribosomal_bS16"/>
</dbReference>
<dbReference type="InterPro" id="IPR023803">
    <property type="entry name" value="Ribosomal_bS16_dom_sf"/>
</dbReference>
<dbReference type="NCBIfam" id="TIGR00002">
    <property type="entry name" value="S16"/>
    <property type="match status" value="1"/>
</dbReference>
<dbReference type="PANTHER" id="PTHR12919">
    <property type="entry name" value="30S RIBOSOMAL PROTEIN S16"/>
    <property type="match status" value="1"/>
</dbReference>
<dbReference type="PANTHER" id="PTHR12919:SF20">
    <property type="entry name" value="SMALL RIBOSOMAL SUBUNIT PROTEIN BS16M"/>
    <property type="match status" value="1"/>
</dbReference>
<dbReference type="Pfam" id="PF00886">
    <property type="entry name" value="Ribosomal_S16"/>
    <property type="match status" value="1"/>
</dbReference>
<dbReference type="SUPFAM" id="SSF54565">
    <property type="entry name" value="Ribosomal protein S16"/>
    <property type="match status" value="1"/>
</dbReference>
<organism>
    <name type="scientific">Aeromonas hydrophila subsp. hydrophila (strain ATCC 7966 / DSM 30187 / BCRC 13018 / CCUG 14551 / JCM 1027 / KCTC 2358 / NCIMB 9240 / NCTC 8049)</name>
    <dbReference type="NCBI Taxonomy" id="380703"/>
    <lineage>
        <taxon>Bacteria</taxon>
        <taxon>Pseudomonadati</taxon>
        <taxon>Pseudomonadota</taxon>
        <taxon>Gammaproteobacteria</taxon>
        <taxon>Aeromonadales</taxon>
        <taxon>Aeromonadaceae</taxon>
        <taxon>Aeromonas</taxon>
    </lineage>
</organism>
<reference key="1">
    <citation type="journal article" date="2006" name="J. Bacteriol.">
        <title>Genome sequence of Aeromonas hydrophila ATCC 7966T: jack of all trades.</title>
        <authorList>
            <person name="Seshadri R."/>
            <person name="Joseph S.W."/>
            <person name="Chopra A.K."/>
            <person name="Sha J."/>
            <person name="Shaw J."/>
            <person name="Graf J."/>
            <person name="Haft D.H."/>
            <person name="Wu M."/>
            <person name="Ren Q."/>
            <person name="Rosovitz M.J."/>
            <person name="Madupu R."/>
            <person name="Tallon L."/>
            <person name="Kim M."/>
            <person name="Jin S."/>
            <person name="Vuong H."/>
            <person name="Stine O.C."/>
            <person name="Ali A."/>
            <person name="Horneman A.J."/>
            <person name="Heidelberg J.F."/>
        </authorList>
    </citation>
    <scope>NUCLEOTIDE SEQUENCE [LARGE SCALE GENOMIC DNA]</scope>
    <source>
        <strain>ATCC 7966 / DSM 30187 / BCRC 13018 / CCUG 14551 / JCM 1027 / KCTC 2358 / NCIMB 9240 / NCTC 8049</strain>
    </source>
</reference>
<accession>A0KG23</accession>
<keyword id="KW-1185">Reference proteome</keyword>
<keyword id="KW-0687">Ribonucleoprotein</keyword>
<keyword id="KW-0689">Ribosomal protein</keyword>
<protein>
    <recommendedName>
        <fullName evidence="1">Small ribosomal subunit protein bS16</fullName>
    </recommendedName>
    <alternativeName>
        <fullName evidence="2">30S ribosomal protein S16</fullName>
    </alternativeName>
</protein>
<sequence>MVTIRLQRGGAKKRPFYQVVVADSRNARDGRFIERVGFFNPVASGNAEKLNLDLARIEHWVGTGAAVSDRVAKLIKDAAKAA</sequence>
<feature type="chain" id="PRO_1000049207" description="Small ribosomal subunit protein bS16">
    <location>
        <begin position="1"/>
        <end position="82"/>
    </location>
</feature>
<proteinExistence type="inferred from homology"/>
<gene>
    <name evidence="1" type="primary">rpsP</name>
    <name type="ordered locus">AHA_0666</name>
</gene>